<reference key="1">
    <citation type="submission" date="2006-01" db="EMBL/GenBank/DDBJ databases">
        <title>Complete sequence of Rhodopseudomonas palustris HaA2.</title>
        <authorList>
            <consortium name="US DOE Joint Genome Institute"/>
            <person name="Copeland A."/>
            <person name="Lucas S."/>
            <person name="Lapidus A."/>
            <person name="Barry K."/>
            <person name="Detter J.C."/>
            <person name="Glavina T."/>
            <person name="Hammon N."/>
            <person name="Israni S."/>
            <person name="Pitluck S."/>
            <person name="Chain P."/>
            <person name="Malfatti S."/>
            <person name="Shin M."/>
            <person name="Vergez L."/>
            <person name="Schmutz J."/>
            <person name="Larimer F."/>
            <person name="Land M."/>
            <person name="Hauser L."/>
            <person name="Pelletier D.A."/>
            <person name="Kyrpides N."/>
            <person name="Anderson I."/>
            <person name="Oda Y."/>
            <person name="Harwood C.S."/>
            <person name="Richardson P."/>
        </authorList>
    </citation>
    <scope>NUCLEOTIDE SEQUENCE [LARGE SCALE GENOMIC DNA]</scope>
    <source>
        <strain>HaA2</strain>
    </source>
</reference>
<comment type="function">
    <text evidence="1">Plays an important role in the de novo pathway of purine nucleotide biosynthesis. Catalyzes the first committed step in the biosynthesis of AMP from IMP.</text>
</comment>
<comment type="catalytic activity">
    <reaction evidence="1">
        <text>IMP + L-aspartate + GTP = N(6)-(1,2-dicarboxyethyl)-AMP + GDP + phosphate + 2 H(+)</text>
        <dbReference type="Rhea" id="RHEA:15753"/>
        <dbReference type="ChEBI" id="CHEBI:15378"/>
        <dbReference type="ChEBI" id="CHEBI:29991"/>
        <dbReference type="ChEBI" id="CHEBI:37565"/>
        <dbReference type="ChEBI" id="CHEBI:43474"/>
        <dbReference type="ChEBI" id="CHEBI:57567"/>
        <dbReference type="ChEBI" id="CHEBI:58053"/>
        <dbReference type="ChEBI" id="CHEBI:58189"/>
        <dbReference type="EC" id="6.3.4.4"/>
    </reaction>
</comment>
<comment type="cofactor">
    <cofactor evidence="1">
        <name>Mg(2+)</name>
        <dbReference type="ChEBI" id="CHEBI:18420"/>
    </cofactor>
    <text evidence="1">Binds 1 Mg(2+) ion per subunit.</text>
</comment>
<comment type="pathway">
    <text evidence="1">Purine metabolism; AMP biosynthesis via de novo pathway; AMP from IMP: step 1/2.</text>
</comment>
<comment type="subunit">
    <text evidence="1">Homodimer.</text>
</comment>
<comment type="subcellular location">
    <subcellularLocation>
        <location evidence="1">Cytoplasm</location>
    </subcellularLocation>
</comment>
<comment type="similarity">
    <text evidence="1">Belongs to the adenylosuccinate synthetase family.</text>
</comment>
<keyword id="KW-0963">Cytoplasm</keyword>
<keyword id="KW-0342">GTP-binding</keyword>
<keyword id="KW-0436">Ligase</keyword>
<keyword id="KW-0460">Magnesium</keyword>
<keyword id="KW-0479">Metal-binding</keyword>
<keyword id="KW-0547">Nucleotide-binding</keyword>
<keyword id="KW-0658">Purine biosynthesis</keyword>
<keyword id="KW-1185">Reference proteome</keyword>
<protein>
    <recommendedName>
        <fullName evidence="1">Adenylosuccinate synthetase</fullName>
        <shortName evidence="1">AMPSase</shortName>
        <shortName evidence="1">AdSS</shortName>
        <ecNumber evidence="1">6.3.4.4</ecNumber>
    </recommendedName>
    <alternativeName>
        <fullName evidence="1">IMP--aspartate ligase</fullName>
    </alternativeName>
</protein>
<dbReference type="EC" id="6.3.4.4" evidence="1"/>
<dbReference type="EMBL" id="CP000250">
    <property type="protein sequence ID" value="ABD06040.1"/>
    <property type="molecule type" value="Genomic_DNA"/>
</dbReference>
<dbReference type="RefSeq" id="WP_011440228.1">
    <property type="nucleotide sequence ID" value="NC_007778.1"/>
</dbReference>
<dbReference type="SMR" id="Q2J0H0"/>
<dbReference type="STRING" id="316058.RPB_1330"/>
<dbReference type="KEGG" id="rpb:RPB_1330"/>
<dbReference type="eggNOG" id="COG0104">
    <property type="taxonomic scope" value="Bacteria"/>
</dbReference>
<dbReference type="HOGENOM" id="CLU_029848_0_0_5"/>
<dbReference type="OrthoDB" id="9807553at2"/>
<dbReference type="UniPathway" id="UPA00075">
    <property type="reaction ID" value="UER00335"/>
</dbReference>
<dbReference type="Proteomes" id="UP000008809">
    <property type="component" value="Chromosome"/>
</dbReference>
<dbReference type="GO" id="GO:0005737">
    <property type="term" value="C:cytoplasm"/>
    <property type="evidence" value="ECO:0007669"/>
    <property type="project" value="UniProtKB-SubCell"/>
</dbReference>
<dbReference type="GO" id="GO:0004019">
    <property type="term" value="F:adenylosuccinate synthase activity"/>
    <property type="evidence" value="ECO:0007669"/>
    <property type="project" value="UniProtKB-UniRule"/>
</dbReference>
<dbReference type="GO" id="GO:0005525">
    <property type="term" value="F:GTP binding"/>
    <property type="evidence" value="ECO:0007669"/>
    <property type="project" value="UniProtKB-UniRule"/>
</dbReference>
<dbReference type="GO" id="GO:0000287">
    <property type="term" value="F:magnesium ion binding"/>
    <property type="evidence" value="ECO:0007669"/>
    <property type="project" value="UniProtKB-UniRule"/>
</dbReference>
<dbReference type="GO" id="GO:0044208">
    <property type="term" value="P:'de novo' AMP biosynthetic process"/>
    <property type="evidence" value="ECO:0007669"/>
    <property type="project" value="UniProtKB-UniRule"/>
</dbReference>
<dbReference type="GO" id="GO:0046040">
    <property type="term" value="P:IMP metabolic process"/>
    <property type="evidence" value="ECO:0007669"/>
    <property type="project" value="TreeGrafter"/>
</dbReference>
<dbReference type="CDD" id="cd03108">
    <property type="entry name" value="AdSS"/>
    <property type="match status" value="1"/>
</dbReference>
<dbReference type="FunFam" id="1.10.300.10:FF:000001">
    <property type="entry name" value="Adenylosuccinate synthetase"/>
    <property type="match status" value="1"/>
</dbReference>
<dbReference type="FunFam" id="3.90.170.10:FF:000001">
    <property type="entry name" value="Adenylosuccinate synthetase"/>
    <property type="match status" value="1"/>
</dbReference>
<dbReference type="Gene3D" id="3.40.440.10">
    <property type="entry name" value="Adenylosuccinate Synthetase, subunit A, domain 1"/>
    <property type="match status" value="1"/>
</dbReference>
<dbReference type="Gene3D" id="1.10.300.10">
    <property type="entry name" value="Adenylosuccinate Synthetase, subunit A, domain 2"/>
    <property type="match status" value="1"/>
</dbReference>
<dbReference type="Gene3D" id="3.90.170.10">
    <property type="entry name" value="Adenylosuccinate Synthetase, subunit A, domain 3"/>
    <property type="match status" value="1"/>
</dbReference>
<dbReference type="HAMAP" id="MF_00011">
    <property type="entry name" value="Adenylosucc_synth"/>
    <property type="match status" value="1"/>
</dbReference>
<dbReference type="InterPro" id="IPR018220">
    <property type="entry name" value="Adenylosuccin_syn_GTP-bd"/>
</dbReference>
<dbReference type="InterPro" id="IPR033128">
    <property type="entry name" value="Adenylosuccin_syn_Lys_AS"/>
</dbReference>
<dbReference type="InterPro" id="IPR042109">
    <property type="entry name" value="Adenylosuccinate_synth_dom1"/>
</dbReference>
<dbReference type="InterPro" id="IPR042110">
    <property type="entry name" value="Adenylosuccinate_synth_dom2"/>
</dbReference>
<dbReference type="InterPro" id="IPR042111">
    <property type="entry name" value="Adenylosuccinate_synth_dom3"/>
</dbReference>
<dbReference type="InterPro" id="IPR001114">
    <property type="entry name" value="Adenylosuccinate_synthetase"/>
</dbReference>
<dbReference type="InterPro" id="IPR027417">
    <property type="entry name" value="P-loop_NTPase"/>
</dbReference>
<dbReference type="NCBIfam" id="NF002223">
    <property type="entry name" value="PRK01117.1"/>
    <property type="match status" value="1"/>
</dbReference>
<dbReference type="NCBIfam" id="TIGR00184">
    <property type="entry name" value="purA"/>
    <property type="match status" value="1"/>
</dbReference>
<dbReference type="PANTHER" id="PTHR11846">
    <property type="entry name" value="ADENYLOSUCCINATE SYNTHETASE"/>
    <property type="match status" value="1"/>
</dbReference>
<dbReference type="PANTHER" id="PTHR11846:SF0">
    <property type="entry name" value="ADENYLOSUCCINATE SYNTHETASE"/>
    <property type="match status" value="1"/>
</dbReference>
<dbReference type="Pfam" id="PF00709">
    <property type="entry name" value="Adenylsucc_synt"/>
    <property type="match status" value="1"/>
</dbReference>
<dbReference type="SMART" id="SM00788">
    <property type="entry name" value="Adenylsucc_synt"/>
    <property type="match status" value="1"/>
</dbReference>
<dbReference type="SUPFAM" id="SSF52540">
    <property type="entry name" value="P-loop containing nucleoside triphosphate hydrolases"/>
    <property type="match status" value="1"/>
</dbReference>
<dbReference type="PROSITE" id="PS01266">
    <property type="entry name" value="ADENYLOSUCCIN_SYN_1"/>
    <property type="match status" value="1"/>
</dbReference>
<dbReference type="PROSITE" id="PS00513">
    <property type="entry name" value="ADENYLOSUCCIN_SYN_2"/>
    <property type="match status" value="1"/>
</dbReference>
<organism>
    <name type="scientific">Rhodopseudomonas palustris (strain HaA2)</name>
    <dbReference type="NCBI Taxonomy" id="316058"/>
    <lineage>
        <taxon>Bacteria</taxon>
        <taxon>Pseudomonadati</taxon>
        <taxon>Pseudomonadota</taxon>
        <taxon>Alphaproteobacteria</taxon>
        <taxon>Hyphomicrobiales</taxon>
        <taxon>Nitrobacteraceae</taxon>
        <taxon>Rhodopseudomonas</taxon>
    </lineage>
</organism>
<name>PURA_RHOP2</name>
<gene>
    <name evidence="1" type="primary">purA</name>
    <name type="ordered locus">RPB_1330</name>
</gene>
<feature type="chain" id="PRO_1000000904" description="Adenylosuccinate synthetase">
    <location>
        <begin position="1"/>
        <end position="430"/>
    </location>
</feature>
<feature type="active site" description="Proton acceptor" evidence="1">
    <location>
        <position position="13"/>
    </location>
</feature>
<feature type="active site" description="Proton donor" evidence="1">
    <location>
        <position position="41"/>
    </location>
</feature>
<feature type="binding site" evidence="1">
    <location>
        <begin position="12"/>
        <end position="18"/>
    </location>
    <ligand>
        <name>GTP</name>
        <dbReference type="ChEBI" id="CHEBI:37565"/>
    </ligand>
</feature>
<feature type="binding site" description="in other chain" evidence="1">
    <location>
        <begin position="13"/>
        <end position="16"/>
    </location>
    <ligand>
        <name>IMP</name>
        <dbReference type="ChEBI" id="CHEBI:58053"/>
        <note>ligand shared between dimeric partners</note>
    </ligand>
</feature>
<feature type="binding site" evidence="1">
    <location>
        <position position="13"/>
    </location>
    <ligand>
        <name>Mg(2+)</name>
        <dbReference type="ChEBI" id="CHEBI:18420"/>
    </ligand>
</feature>
<feature type="binding site" description="in other chain" evidence="1">
    <location>
        <begin position="38"/>
        <end position="41"/>
    </location>
    <ligand>
        <name>IMP</name>
        <dbReference type="ChEBI" id="CHEBI:58053"/>
        <note>ligand shared between dimeric partners</note>
    </ligand>
</feature>
<feature type="binding site" evidence="1">
    <location>
        <begin position="40"/>
        <end position="42"/>
    </location>
    <ligand>
        <name>GTP</name>
        <dbReference type="ChEBI" id="CHEBI:37565"/>
    </ligand>
</feature>
<feature type="binding site" evidence="1">
    <location>
        <position position="40"/>
    </location>
    <ligand>
        <name>Mg(2+)</name>
        <dbReference type="ChEBI" id="CHEBI:18420"/>
    </ligand>
</feature>
<feature type="binding site" description="in other chain" evidence="1">
    <location>
        <position position="130"/>
    </location>
    <ligand>
        <name>IMP</name>
        <dbReference type="ChEBI" id="CHEBI:58053"/>
        <note>ligand shared between dimeric partners</note>
    </ligand>
</feature>
<feature type="binding site" evidence="1">
    <location>
        <position position="144"/>
    </location>
    <ligand>
        <name>IMP</name>
        <dbReference type="ChEBI" id="CHEBI:58053"/>
        <note>ligand shared between dimeric partners</note>
    </ligand>
</feature>
<feature type="binding site" description="in other chain" evidence="1">
    <location>
        <position position="224"/>
    </location>
    <ligand>
        <name>IMP</name>
        <dbReference type="ChEBI" id="CHEBI:58053"/>
        <note>ligand shared between dimeric partners</note>
    </ligand>
</feature>
<feature type="binding site" description="in other chain" evidence="1">
    <location>
        <position position="239"/>
    </location>
    <ligand>
        <name>IMP</name>
        <dbReference type="ChEBI" id="CHEBI:58053"/>
        <note>ligand shared between dimeric partners</note>
    </ligand>
</feature>
<feature type="binding site" evidence="1">
    <location>
        <begin position="299"/>
        <end position="305"/>
    </location>
    <ligand>
        <name>substrate</name>
    </ligand>
</feature>
<feature type="binding site" description="in other chain" evidence="1">
    <location>
        <position position="303"/>
    </location>
    <ligand>
        <name>IMP</name>
        <dbReference type="ChEBI" id="CHEBI:58053"/>
        <note>ligand shared between dimeric partners</note>
    </ligand>
</feature>
<feature type="binding site" evidence="1">
    <location>
        <position position="305"/>
    </location>
    <ligand>
        <name>GTP</name>
        <dbReference type="ChEBI" id="CHEBI:37565"/>
    </ligand>
</feature>
<feature type="binding site" evidence="1">
    <location>
        <begin position="331"/>
        <end position="333"/>
    </location>
    <ligand>
        <name>GTP</name>
        <dbReference type="ChEBI" id="CHEBI:37565"/>
    </ligand>
</feature>
<feature type="binding site" evidence="1">
    <location>
        <begin position="413"/>
        <end position="415"/>
    </location>
    <ligand>
        <name>GTP</name>
        <dbReference type="ChEBI" id="CHEBI:37565"/>
    </ligand>
</feature>
<accession>Q2J0H0</accession>
<evidence type="ECO:0000255" key="1">
    <source>
        <dbReference type="HAMAP-Rule" id="MF_00011"/>
    </source>
</evidence>
<proteinExistence type="inferred from homology"/>
<sequence length="430" mass="46827">MANVVVVGAQWGDEGKGKIVDWLSEQADIVARFQGGHNAGHTLVINGETYKLALLPSGVLRPSKLAVIGNGVVFDPQAFLDEVERLTKQGVAISPENLRVAENVTLILPLHRELDALRENASKATAIGTTQRGIGPAYEDKVGRRAIRLMDLADIDTLPHKIERLLTHHNALRRGLGLAEFEAGAILKELTALAPKLLPYAETVWRLLDIKRREGKRILFEGAQGALLDVDHGTYPYVTSSNTVAAQAATGTGMGPGSVGYVLGICKAYTTRVGQGPFPTELDNEIGRKIGERGREFGTNTGRPRRCGWFDAVLVRQTVRTCGIHGLALTKLDILDGFEQIEVCVGYRLDGKEIDHLPAGEGAQARVEPIYETIEGWKEPTANARSWAELPAQAIKYVRRIEELVGCPVALLSTSPEREDTILVQNPFEA</sequence>